<organism>
    <name type="scientific">Synechococcus sp. (strain WH7803)</name>
    <dbReference type="NCBI Taxonomy" id="32051"/>
    <lineage>
        <taxon>Bacteria</taxon>
        <taxon>Bacillati</taxon>
        <taxon>Cyanobacteriota</taxon>
        <taxon>Cyanophyceae</taxon>
        <taxon>Synechococcales</taxon>
        <taxon>Synechococcaceae</taxon>
        <taxon>Synechococcus</taxon>
    </lineage>
</organism>
<dbReference type="EMBL" id="CT971583">
    <property type="protein sequence ID" value="CAK24564.1"/>
    <property type="molecule type" value="Genomic_DNA"/>
</dbReference>
<dbReference type="SMR" id="A5GNP9"/>
<dbReference type="STRING" id="32051.SynWH7803_2138"/>
<dbReference type="KEGG" id="syx:SynWH7803_2138"/>
<dbReference type="eggNOG" id="COG0828">
    <property type="taxonomic scope" value="Bacteria"/>
</dbReference>
<dbReference type="HOGENOM" id="CLU_159258_3_1_3"/>
<dbReference type="OrthoDB" id="9799244at2"/>
<dbReference type="Proteomes" id="UP000001566">
    <property type="component" value="Chromosome"/>
</dbReference>
<dbReference type="GO" id="GO:1990904">
    <property type="term" value="C:ribonucleoprotein complex"/>
    <property type="evidence" value="ECO:0007669"/>
    <property type="project" value="UniProtKB-KW"/>
</dbReference>
<dbReference type="GO" id="GO:0005840">
    <property type="term" value="C:ribosome"/>
    <property type="evidence" value="ECO:0007669"/>
    <property type="project" value="UniProtKB-KW"/>
</dbReference>
<dbReference type="GO" id="GO:0003735">
    <property type="term" value="F:structural constituent of ribosome"/>
    <property type="evidence" value="ECO:0007669"/>
    <property type="project" value="InterPro"/>
</dbReference>
<dbReference type="GO" id="GO:0006412">
    <property type="term" value="P:translation"/>
    <property type="evidence" value="ECO:0007669"/>
    <property type="project" value="UniProtKB-UniRule"/>
</dbReference>
<dbReference type="Gene3D" id="1.20.5.1150">
    <property type="entry name" value="Ribosomal protein S8"/>
    <property type="match status" value="1"/>
</dbReference>
<dbReference type="HAMAP" id="MF_00358">
    <property type="entry name" value="Ribosomal_bS21"/>
    <property type="match status" value="1"/>
</dbReference>
<dbReference type="InterPro" id="IPR001911">
    <property type="entry name" value="Ribosomal_bS21"/>
</dbReference>
<dbReference type="InterPro" id="IPR018278">
    <property type="entry name" value="Ribosomal_bS21_CS"/>
</dbReference>
<dbReference type="InterPro" id="IPR038380">
    <property type="entry name" value="Ribosomal_bS21_sf"/>
</dbReference>
<dbReference type="NCBIfam" id="TIGR00030">
    <property type="entry name" value="S21p"/>
    <property type="match status" value="1"/>
</dbReference>
<dbReference type="PANTHER" id="PTHR21109">
    <property type="entry name" value="MITOCHONDRIAL 28S RIBOSOMAL PROTEIN S21"/>
    <property type="match status" value="1"/>
</dbReference>
<dbReference type="PANTHER" id="PTHR21109:SF0">
    <property type="entry name" value="SMALL RIBOSOMAL SUBUNIT PROTEIN BS21M"/>
    <property type="match status" value="1"/>
</dbReference>
<dbReference type="Pfam" id="PF01165">
    <property type="entry name" value="Ribosomal_S21"/>
    <property type="match status" value="1"/>
</dbReference>
<dbReference type="PRINTS" id="PR00976">
    <property type="entry name" value="RIBOSOMALS21"/>
</dbReference>
<dbReference type="PROSITE" id="PS01181">
    <property type="entry name" value="RIBOSOMAL_S21"/>
    <property type="match status" value="1"/>
</dbReference>
<proteinExistence type="inferred from homology"/>
<keyword id="KW-1185">Reference proteome</keyword>
<keyword id="KW-0687">Ribonucleoprotein</keyword>
<keyword id="KW-0689">Ribosomal protein</keyword>
<reference key="1">
    <citation type="submission" date="2006-05" db="EMBL/GenBank/DDBJ databases">
        <authorList>
            <consortium name="Genoscope"/>
        </authorList>
    </citation>
    <scope>NUCLEOTIDE SEQUENCE [LARGE SCALE GENOMIC DNA]</scope>
    <source>
        <strain>WH7803</strain>
    </source>
</reference>
<gene>
    <name evidence="1" type="primary">rpsU</name>
    <name evidence="1" type="synonym">rps21</name>
    <name type="ordered locus">SynWH7803_2138</name>
</gene>
<name>RS21_SYNPW</name>
<comment type="similarity">
    <text evidence="1">Belongs to the bacterial ribosomal protein bS21 family.</text>
</comment>
<sequence length="56" mass="6762">MTQVTVGENEGIESALRRFKRQVSKAGIFADLKRLRHHETPIEKYKRKAQQRRRRR</sequence>
<evidence type="ECO:0000255" key="1">
    <source>
        <dbReference type="HAMAP-Rule" id="MF_00358"/>
    </source>
</evidence>
<evidence type="ECO:0000305" key="2"/>
<feature type="chain" id="PRO_1000005182" description="Small ribosomal subunit protein bS21">
    <location>
        <begin position="1"/>
        <end position="56"/>
    </location>
</feature>
<accession>A5GNP9</accession>
<protein>
    <recommendedName>
        <fullName evidence="1">Small ribosomal subunit protein bS21</fullName>
    </recommendedName>
    <alternativeName>
        <fullName evidence="2">30S ribosomal protein S21</fullName>
    </alternativeName>
</protein>